<comment type="miscellaneous">
    <text>This protein has no orthologs in other species and appears to be the product of a protein-coding gene which has arisen since divergence from chimp.</text>
</comment>
<comment type="caution">
    <text evidence="3">Product of a dubious CDS prediction.</text>
</comment>
<gene>
    <name type="primary">ADORA2A-AS1</name>
    <name type="synonym">C22orf45</name>
</gene>
<reference evidence="3" key="1">
    <citation type="journal article" date="2004" name="Nat. Genet.">
        <title>Complete sequencing and characterization of 21,243 full-length human cDNAs.</title>
        <authorList>
            <person name="Ota T."/>
            <person name="Suzuki Y."/>
            <person name="Nishikawa T."/>
            <person name="Otsuki T."/>
            <person name="Sugiyama T."/>
            <person name="Irie R."/>
            <person name="Wakamatsu A."/>
            <person name="Hayashi K."/>
            <person name="Sato H."/>
            <person name="Nagai K."/>
            <person name="Kimura K."/>
            <person name="Makita H."/>
            <person name="Sekine M."/>
            <person name="Obayashi M."/>
            <person name="Nishi T."/>
            <person name="Shibahara T."/>
            <person name="Tanaka T."/>
            <person name="Ishii S."/>
            <person name="Yamamoto J."/>
            <person name="Saito K."/>
            <person name="Kawai Y."/>
            <person name="Isono Y."/>
            <person name="Nakamura Y."/>
            <person name="Nagahari K."/>
            <person name="Murakami K."/>
            <person name="Yasuda T."/>
            <person name="Iwayanagi T."/>
            <person name="Wagatsuma M."/>
            <person name="Shiratori A."/>
            <person name="Sudo H."/>
            <person name="Hosoiri T."/>
            <person name="Kaku Y."/>
            <person name="Kodaira H."/>
            <person name="Kondo H."/>
            <person name="Sugawara M."/>
            <person name="Takahashi M."/>
            <person name="Kanda K."/>
            <person name="Yokoi T."/>
            <person name="Furuya T."/>
            <person name="Kikkawa E."/>
            <person name="Omura Y."/>
            <person name="Abe K."/>
            <person name="Kamihara K."/>
            <person name="Katsuta N."/>
            <person name="Sato K."/>
            <person name="Tanikawa M."/>
            <person name="Yamazaki M."/>
            <person name="Ninomiya K."/>
            <person name="Ishibashi T."/>
            <person name="Yamashita H."/>
            <person name="Murakawa K."/>
            <person name="Fujimori K."/>
            <person name="Tanai H."/>
            <person name="Kimata M."/>
            <person name="Watanabe M."/>
            <person name="Hiraoka S."/>
            <person name="Chiba Y."/>
            <person name="Ishida S."/>
            <person name="Ono Y."/>
            <person name="Takiguchi S."/>
            <person name="Watanabe S."/>
            <person name="Yosida M."/>
            <person name="Hotuta T."/>
            <person name="Kusano J."/>
            <person name="Kanehori K."/>
            <person name="Takahashi-Fujii A."/>
            <person name="Hara H."/>
            <person name="Tanase T.-O."/>
            <person name="Nomura Y."/>
            <person name="Togiya S."/>
            <person name="Komai F."/>
            <person name="Hara R."/>
            <person name="Takeuchi K."/>
            <person name="Arita M."/>
            <person name="Imose N."/>
            <person name="Musashino K."/>
            <person name="Yuuki H."/>
            <person name="Oshima A."/>
            <person name="Sasaki N."/>
            <person name="Aotsuka S."/>
            <person name="Yoshikawa Y."/>
            <person name="Matsunawa H."/>
            <person name="Ichihara T."/>
            <person name="Shiohata N."/>
            <person name="Sano S."/>
            <person name="Moriya S."/>
            <person name="Momiyama H."/>
            <person name="Satoh N."/>
            <person name="Takami S."/>
            <person name="Terashima Y."/>
            <person name="Suzuki O."/>
            <person name="Nakagawa S."/>
            <person name="Senoh A."/>
            <person name="Mizoguchi H."/>
            <person name="Goto Y."/>
            <person name="Shimizu F."/>
            <person name="Wakebe H."/>
            <person name="Hishigaki H."/>
            <person name="Watanabe T."/>
            <person name="Sugiyama A."/>
            <person name="Takemoto M."/>
            <person name="Kawakami B."/>
            <person name="Yamazaki M."/>
            <person name="Watanabe K."/>
            <person name="Kumagai A."/>
            <person name="Itakura S."/>
            <person name="Fukuzumi Y."/>
            <person name="Fujimori Y."/>
            <person name="Komiyama M."/>
            <person name="Tashiro H."/>
            <person name="Tanigami A."/>
            <person name="Fujiwara T."/>
            <person name="Ono T."/>
            <person name="Yamada K."/>
            <person name="Fujii Y."/>
            <person name="Ozaki K."/>
            <person name="Hirao M."/>
            <person name="Ohmori Y."/>
            <person name="Kawabata A."/>
            <person name="Hikiji T."/>
            <person name="Kobatake N."/>
            <person name="Inagaki H."/>
            <person name="Ikema Y."/>
            <person name="Okamoto S."/>
            <person name="Okitani R."/>
            <person name="Kawakami T."/>
            <person name="Noguchi S."/>
            <person name="Itoh T."/>
            <person name="Shigeta K."/>
            <person name="Senba T."/>
            <person name="Matsumura K."/>
            <person name="Nakajima Y."/>
            <person name="Mizuno T."/>
            <person name="Morinaga M."/>
            <person name="Sasaki M."/>
            <person name="Togashi T."/>
            <person name="Oyama M."/>
            <person name="Hata H."/>
            <person name="Watanabe M."/>
            <person name="Komatsu T."/>
            <person name="Mizushima-Sugano J."/>
            <person name="Satoh T."/>
            <person name="Shirai Y."/>
            <person name="Takahashi Y."/>
            <person name="Nakagawa K."/>
            <person name="Okumura K."/>
            <person name="Nagase T."/>
            <person name="Nomura N."/>
            <person name="Kikuchi H."/>
            <person name="Masuho Y."/>
            <person name="Yamashita R."/>
            <person name="Nakai K."/>
            <person name="Yada T."/>
            <person name="Nakamura Y."/>
            <person name="Ohara O."/>
            <person name="Isogai T."/>
            <person name="Sugano S."/>
        </authorList>
    </citation>
    <scope>NUCLEOTIDE SEQUENCE [LARGE SCALE MRNA]</scope>
    <source>
        <tissue evidence="2">Kidney</tissue>
    </source>
</reference>
<reference key="2">
    <citation type="journal article" date="1999" name="Nature">
        <title>The DNA sequence of human chromosome 22.</title>
        <authorList>
            <person name="Dunham I."/>
            <person name="Hunt A.R."/>
            <person name="Collins J.E."/>
            <person name="Bruskiewich R."/>
            <person name="Beare D.M."/>
            <person name="Clamp M."/>
            <person name="Smink L.J."/>
            <person name="Ainscough R."/>
            <person name="Almeida J.P."/>
            <person name="Babbage A.K."/>
            <person name="Bagguley C."/>
            <person name="Bailey J."/>
            <person name="Barlow K.F."/>
            <person name="Bates K.N."/>
            <person name="Beasley O.P."/>
            <person name="Bird C.P."/>
            <person name="Blakey S.E."/>
            <person name="Bridgeman A.M."/>
            <person name="Buck D."/>
            <person name="Burgess J."/>
            <person name="Burrill W.D."/>
            <person name="Burton J."/>
            <person name="Carder C."/>
            <person name="Carter N.P."/>
            <person name="Chen Y."/>
            <person name="Clark G."/>
            <person name="Clegg S.M."/>
            <person name="Cobley V.E."/>
            <person name="Cole C.G."/>
            <person name="Collier R.E."/>
            <person name="Connor R."/>
            <person name="Conroy D."/>
            <person name="Corby N.R."/>
            <person name="Coville G.J."/>
            <person name="Cox A.V."/>
            <person name="Davis J."/>
            <person name="Dawson E."/>
            <person name="Dhami P.D."/>
            <person name="Dockree C."/>
            <person name="Dodsworth S.J."/>
            <person name="Durbin R.M."/>
            <person name="Ellington A.G."/>
            <person name="Evans K.L."/>
            <person name="Fey J.M."/>
            <person name="Fleming K."/>
            <person name="French L."/>
            <person name="Garner A.A."/>
            <person name="Gilbert J.G.R."/>
            <person name="Goward M.E."/>
            <person name="Grafham D.V."/>
            <person name="Griffiths M.N.D."/>
            <person name="Hall C."/>
            <person name="Hall R.E."/>
            <person name="Hall-Tamlyn G."/>
            <person name="Heathcott R.W."/>
            <person name="Ho S."/>
            <person name="Holmes S."/>
            <person name="Hunt S.E."/>
            <person name="Jones M.C."/>
            <person name="Kershaw J."/>
            <person name="Kimberley A.M."/>
            <person name="King A."/>
            <person name="Laird G.K."/>
            <person name="Langford C.F."/>
            <person name="Leversha M.A."/>
            <person name="Lloyd C."/>
            <person name="Lloyd D.M."/>
            <person name="Martyn I.D."/>
            <person name="Mashreghi-Mohammadi M."/>
            <person name="Matthews L.H."/>
            <person name="Mccann O.T."/>
            <person name="Mcclay J."/>
            <person name="Mclaren S."/>
            <person name="McMurray A.A."/>
            <person name="Milne S.A."/>
            <person name="Mortimore B.J."/>
            <person name="Odell C.N."/>
            <person name="Pavitt R."/>
            <person name="Pearce A.V."/>
            <person name="Pearson D."/>
            <person name="Phillimore B.J.C.T."/>
            <person name="Phillips S.H."/>
            <person name="Plumb R.W."/>
            <person name="Ramsay H."/>
            <person name="Ramsey Y."/>
            <person name="Rogers L."/>
            <person name="Ross M.T."/>
            <person name="Scott C.E."/>
            <person name="Sehra H.K."/>
            <person name="Skuce C.D."/>
            <person name="Smalley S."/>
            <person name="Smith M.L."/>
            <person name="Soderlund C."/>
            <person name="Spragon L."/>
            <person name="Steward C.A."/>
            <person name="Sulston J.E."/>
            <person name="Swann R.M."/>
            <person name="Vaudin M."/>
            <person name="Wall M."/>
            <person name="Wallis J.M."/>
            <person name="Whiteley M.N."/>
            <person name="Willey D.L."/>
            <person name="Williams L."/>
            <person name="Williams S.A."/>
            <person name="Williamson H."/>
            <person name="Wilmer T.E."/>
            <person name="Wilming L."/>
            <person name="Wright C.L."/>
            <person name="Hubbard T."/>
            <person name="Bentley D.R."/>
            <person name="Beck S."/>
            <person name="Rogers J."/>
            <person name="Shimizu N."/>
            <person name="Minoshima S."/>
            <person name="Kawasaki K."/>
            <person name="Sasaki T."/>
            <person name="Asakawa S."/>
            <person name="Kudoh J."/>
            <person name="Shintani A."/>
            <person name="Shibuya K."/>
            <person name="Yoshizaki Y."/>
            <person name="Aoki N."/>
            <person name="Mitsuyama S."/>
            <person name="Roe B.A."/>
            <person name="Chen F."/>
            <person name="Chu L."/>
            <person name="Crabtree J."/>
            <person name="Deschamps S."/>
            <person name="Do A."/>
            <person name="Do T."/>
            <person name="Dorman A."/>
            <person name="Fang F."/>
            <person name="Fu Y."/>
            <person name="Hu P."/>
            <person name="Hua A."/>
            <person name="Kenton S."/>
            <person name="Lai H."/>
            <person name="Lao H.I."/>
            <person name="Lewis J."/>
            <person name="Lewis S."/>
            <person name="Lin S.-P."/>
            <person name="Loh P."/>
            <person name="Malaj E."/>
            <person name="Nguyen T."/>
            <person name="Pan H."/>
            <person name="Phan S."/>
            <person name="Qi S."/>
            <person name="Qian Y."/>
            <person name="Ray L."/>
            <person name="Ren Q."/>
            <person name="Shaull S."/>
            <person name="Sloan D."/>
            <person name="Song L."/>
            <person name="Wang Q."/>
            <person name="Wang Y."/>
            <person name="Wang Z."/>
            <person name="White J."/>
            <person name="Willingham D."/>
            <person name="Wu H."/>
            <person name="Yao Z."/>
            <person name="Zhan M."/>
            <person name="Zhang G."/>
            <person name="Chissoe S."/>
            <person name="Murray J."/>
            <person name="Miller N."/>
            <person name="Minx P."/>
            <person name="Fulton R."/>
            <person name="Johnson D."/>
            <person name="Bemis G."/>
            <person name="Bentley D."/>
            <person name="Bradshaw H."/>
            <person name="Bourne S."/>
            <person name="Cordes M."/>
            <person name="Du Z."/>
            <person name="Fulton L."/>
            <person name="Goela D."/>
            <person name="Graves T."/>
            <person name="Hawkins J."/>
            <person name="Hinds K."/>
            <person name="Kemp K."/>
            <person name="Latreille P."/>
            <person name="Layman D."/>
            <person name="Ozersky P."/>
            <person name="Rohlfing T."/>
            <person name="Scheet P."/>
            <person name="Walker C."/>
            <person name="Wamsley A."/>
            <person name="Wohldmann P."/>
            <person name="Pepin K."/>
            <person name="Nelson J."/>
            <person name="Korf I."/>
            <person name="Bedell J.A."/>
            <person name="Hillier L.W."/>
            <person name="Mardis E."/>
            <person name="Waterston R."/>
            <person name="Wilson R."/>
            <person name="Emanuel B.S."/>
            <person name="Shaikh T."/>
            <person name="Kurahashi H."/>
            <person name="Saitta S."/>
            <person name="Budarf M.L."/>
            <person name="McDermid H.E."/>
            <person name="Johnson A."/>
            <person name="Wong A.C.C."/>
            <person name="Morrow B.E."/>
            <person name="Edelmann L."/>
            <person name="Kim U.J."/>
            <person name="Shizuya H."/>
            <person name="Simon M.I."/>
            <person name="Dumanski J.P."/>
            <person name="Peyrard M."/>
            <person name="Kedra D."/>
            <person name="Seroussi E."/>
            <person name="Fransson I."/>
            <person name="Tapia I."/>
            <person name="Bruder C.E."/>
            <person name="O'Brien K.P."/>
            <person name="Wilkinson P."/>
            <person name="Bodenteich A."/>
            <person name="Hartman K."/>
            <person name="Hu X."/>
            <person name="Khan A.S."/>
            <person name="Lane L."/>
            <person name="Tilahun Y."/>
            <person name="Wright H."/>
        </authorList>
    </citation>
    <scope>NUCLEOTIDE SEQUENCE [LARGE SCALE GENOMIC DNA]</scope>
</reference>
<reference evidence="3" key="3">
    <citation type="journal article" date="2009" name="Genome Res.">
        <title>Recent de novo origin of human protein-coding genes.</title>
        <authorList>
            <person name="Knowles D.G."/>
            <person name="McLysaght A."/>
        </authorList>
    </citation>
    <scope>IDENTIFICATION</scope>
</reference>
<proteinExistence type="uncertain"/>
<name>AAS1_HUMAN</name>
<accession>P86434</accession>
<organism>
    <name type="scientific">Homo sapiens</name>
    <name type="common">Human</name>
    <dbReference type="NCBI Taxonomy" id="9606"/>
    <lineage>
        <taxon>Eukaryota</taxon>
        <taxon>Metazoa</taxon>
        <taxon>Chordata</taxon>
        <taxon>Craniata</taxon>
        <taxon>Vertebrata</taxon>
        <taxon>Euteleostomi</taxon>
        <taxon>Mammalia</taxon>
        <taxon>Eutheria</taxon>
        <taxon>Euarchontoglires</taxon>
        <taxon>Primates</taxon>
        <taxon>Haplorrhini</taxon>
        <taxon>Catarrhini</taxon>
        <taxon>Hominidae</taxon>
        <taxon>Homo</taxon>
    </lineage>
</organism>
<evidence type="ECO:0000256" key="1">
    <source>
        <dbReference type="SAM" id="MobiDB-lite"/>
    </source>
</evidence>
<evidence type="ECO:0000269" key="2">
    <source>
    </source>
</evidence>
<evidence type="ECO:0000305" key="3"/>
<sequence length="159" mass="17238">MEQDWQPGEEVTPGPEPCSKGQAPLYPIVHVTELKHTDPNFPSNSNAVGTSSGWNRIGTGCSHTWDWRFSCTQQALLPLLGAWEWSIDTEAGGGRREQSQKPCSNGGPAAAGEGRVLPSPCFPWSTCQAAIHKVCRWQGCTRPALLAPSLATLKEHSYP</sequence>
<feature type="chain" id="PRO_0000391464" description="Putative uncharacterized protein ADORA2A-AS1">
    <location>
        <begin position="1"/>
        <end position="159"/>
    </location>
</feature>
<feature type="region of interest" description="Disordered" evidence="1">
    <location>
        <begin position="1"/>
        <end position="23"/>
    </location>
</feature>
<feature type="region of interest" description="Disordered" evidence="1">
    <location>
        <begin position="91"/>
        <end position="110"/>
    </location>
</feature>
<dbReference type="EMBL" id="AK091970">
    <property type="status" value="NOT_ANNOTATED_CDS"/>
    <property type="molecule type" value="mRNA"/>
</dbReference>
<dbReference type="EMBL" id="AP000355">
    <property type="status" value="NOT_ANNOTATED_CDS"/>
    <property type="molecule type" value="Genomic_DNA"/>
</dbReference>
<dbReference type="GlyGen" id="P86434">
    <property type="glycosylation" value="1 site"/>
</dbReference>
<dbReference type="BioMuta" id="HGNC:37122"/>
<dbReference type="jPOST" id="P86434"/>
<dbReference type="MassIVE" id="P86434"/>
<dbReference type="PeptideAtlas" id="P86434"/>
<dbReference type="AGR" id="HGNC:37122"/>
<dbReference type="GeneCards" id="ADORA2A-AS1"/>
<dbReference type="HGNC" id="HGNC:37122">
    <property type="gene designation" value="ADORA2A-AS1"/>
</dbReference>
<dbReference type="neXtProt" id="NX_P86434"/>
<dbReference type="InParanoid" id="P86434"/>
<dbReference type="PAN-GO" id="P86434">
    <property type="GO annotations" value="0 GO annotations based on evolutionary models"/>
</dbReference>
<dbReference type="PathwayCommons" id="P86434"/>
<dbReference type="ChiTaRS" id="ADORA2A-AS1">
    <property type="organism name" value="human"/>
</dbReference>
<dbReference type="Pharos" id="P86434">
    <property type="development level" value="Tdark"/>
</dbReference>
<dbReference type="Proteomes" id="UP000005640">
    <property type="component" value="Unplaced"/>
</dbReference>
<dbReference type="RNAct" id="P86434">
    <property type="molecule type" value="protein"/>
</dbReference>
<protein>
    <recommendedName>
        <fullName>Putative uncharacterized protein ADORA2A-AS1</fullName>
    </recommendedName>
    <alternativeName>
        <fullName>ADORA2A antisense RNA 1</fullName>
    </alternativeName>
    <alternativeName>
        <fullName>ADORA2A antisense gene protein 1</fullName>
    </alternativeName>
</protein>
<keyword id="KW-1185">Reference proteome</keyword>